<comment type="function">
    <text evidence="1">Participates actively in the response to hyperosmotic and heat shock by preventing the aggregation of stress-denatured proteins, in association with DnaK and GrpE. It is the nucleotide exchange factor for DnaK and may function as a thermosensor. Unfolded proteins bind initially to DnaJ; upon interaction with the DnaJ-bound protein, DnaK hydrolyzes its bound ATP, resulting in the formation of a stable complex. GrpE releases ADP from DnaK; ATP binding to DnaK triggers the release of the substrate protein, thus completing the reaction cycle. Several rounds of ATP-dependent interactions between DnaJ, DnaK and GrpE are required for fully efficient folding.</text>
</comment>
<comment type="subunit">
    <text evidence="1">Homodimer.</text>
</comment>
<comment type="subcellular location">
    <subcellularLocation>
        <location evidence="1">Cytoplasm</location>
    </subcellularLocation>
</comment>
<comment type="similarity">
    <text evidence="1">Belongs to the GrpE family.</text>
</comment>
<feature type="chain" id="PRO_0000113907" description="Protein GrpE">
    <location>
        <begin position="1"/>
        <end position="217"/>
    </location>
</feature>
<feature type="region of interest" description="Disordered" evidence="2">
    <location>
        <begin position="1"/>
        <end position="39"/>
    </location>
</feature>
<feature type="compositionally biased region" description="Basic and acidic residues" evidence="2">
    <location>
        <begin position="1"/>
        <end position="10"/>
    </location>
</feature>
<feature type="compositionally biased region" description="Acidic residues" evidence="2">
    <location>
        <begin position="12"/>
        <end position="31"/>
    </location>
</feature>
<evidence type="ECO:0000255" key="1">
    <source>
        <dbReference type="HAMAP-Rule" id="MF_01151"/>
    </source>
</evidence>
<evidence type="ECO:0000256" key="2">
    <source>
        <dbReference type="SAM" id="MobiDB-lite"/>
    </source>
</evidence>
<name>GRPE_HALSA</name>
<accession>Q9HRY0</accession>
<protein>
    <recommendedName>
        <fullName evidence="1">Protein GrpE</fullName>
    </recommendedName>
    <alternativeName>
        <fullName evidence="1">HSP-70 cofactor</fullName>
    </alternativeName>
</protein>
<reference key="1">
    <citation type="journal article" date="2000" name="Proc. Natl. Acad. Sci. U.S.A.">
        <title>Genome sequence of Halobacterium species NRC-1.</title>
        <authorList>
            <person name="Ng W.V."/>
            <person name="Kennedy S.P."/>
            <person name="Mahairas G.G."/>
            <person name="Berquist B."/>
            <person name="Pan M."/>
            <person name="Shukla H.D."/>
            <person name="Lasky S.R."/>
            <person name="Baliga N.S."/>
            <person name="Thorsson V."/>
            <person name="Sbrogna J."/>
            <person name="Swartzell S."/>
            <person name="Weir D."/>
            <person name="Hall J."/>
            <person name="Dahl T.A."/>
            <person name="Welti R."/>
            <person name="Goo Y.A."/>
            <person name="Leithauser B."/>
            <person name="Keller K."/>
            <person name="Cruz R."/>
            <person name="Danson M.J."/>
            <person name="Hough D.W."/>
            <person name="Maddocks D.G."/>
            <person name="Jablonski P.E."/>
            <person name="Krebs M.P."/>
            <person name="Angevine C.M."/>
            <person name="Dale H."/>
            <person name="Isenbarger T.A."/>
            <person name="Peck R.F."/>
            <person name="Pohlschroder M."/>
            <person name="Spudich J.L."/>
            <person name="Jung K.-H."/>
            <person name="Alam M."/>
            <person name="Freitas T."/>
            <person name="Hou S."/>
            <person name="Daniels C.J."/>
            <person name="Dennis P.P."/>
            <person name="Omer A.D."/>
            <person name="Ebhardt H."/>
            <person name="Lowe T.M."/>
            <person name="Liang P."/>
            <person name="Riley M."/>
            <person name="Hood L."/>
            <person name="DasSarma S."/>
        </authorList>
    </citation>
    <scope>NUCLEOTIDE SEQUENCE [LARGE SCALE GENOMIC DNA]</scope>
    <source>
        <strain>ATCC 700922 / JCM 11081 / NRC-1</strain>
    </source>
</reference>
<keyword id="KW-0143">Chaperone</keyword>
<keyword id="KW-0963">Cytoplasm</keyword>
<keyword id="KW-1185">Reference proteome</keyword>
<keyword id="KW-0346">Stress response</keyword>
<proteinExistence type="inferred from homology"/>
<gene>
    <name evidence="1" type="primary">grpE</name>
    <name type="ordered locus">VNG_0494G</name>
</gene>
<organism>
    <name type="scientific">Halobacterium salinarum (strain ATCC 700922 / JCM 11081 / NRC-1)</name>
    <name type="common">Halobacterium halobium</name>
    <dbReference type="NCBI Taxonomy" id="64091"/>
    <lineage>
        <taxon>Archaea</taxon>
        <taxon>Methanobacteriati</taxon>
        <taxon>Methanobacteriota</taxon>
        <taxon>Stenosarchaea group</taxon>
        <taxon>Halobacteria</taxon>
        <taxon>Halobacteriales</taxon>
        <taxon>Halobacteriaceae</taxon>
        <taxon>Halobacterium</taxon>
        <taxon>Halobacterium salinarum NRC-34001</taxon>
    </lineage>
</organism>
<dbReference type="EMBL" id="AE004437">
    <property type="protein sequence ID" value="AAG19028.1"/>
    <property type="molecule type" value="Genomic_DNA"/>
</dbReference>
<dbReference type="PIR" id="H84207">
    <property type="entry name" value="H84207"/>
</dbReference>
<dbReference type="RefSeq" id="WP_010902324.1">
    <property type="nucleotide sequence ID" value="NC_002607.1"/>
</dbReference>
<dbReference type="SMR" id="Q9HRY0"/>
<dbReference type="STRING" id="64091.VNG_0494G"/>
<dbReference type="PaxDb" id="64091-VNG_0494G"/>
<dbReference type="KEGG" id="hal:VNG_0494G"/>
<dbReference type="PATRIC" id="fig|64091.14.peg.375"/>
<dbReference type="HOGENOM" id="CLU_057217_3_0_2"/>
<dbReference type="InParanoid" id="Q9HRY0"/>
<dbReference type="OrthoDB" id="372230at2157"/>
<dbReference type="PhylomeDB" id="Q9HRY0"/>
<dbReference type="Proteomes" id="UP000000554">
    <property type="component" value="Chromosome"/>
</dbReference>
<dbReference type="GO" id="GO:0005737">
    <property type="term" value="C:cytoplasm"/>
    <property type="evidence" value="ECO:0007669"/>
    <property type="project" value="UniProtKB-SubCell"/>
</dbReference>
<dbReference type="GO" id="GO:0000774">
    <property type="term" value="F:adenyl-nucleotide exchange factor activity"/>
    <property type="evidence" value="ECO:0000318"/>
    <property type="project" value="GO_Central"/>
</dbReference>
<dbReference type="GO" id="GO:0042803">
    <property type="term" value="F:protein homodimerization activity"/>
    <property type="evidence" value="ECO:0007669"/>
    <property type="project" value="InterPro"/>
</dbReference>
<dbReference type="GO" id="GO:0051087">
    <property type="term" value="F:protein-folding chaperone binding"/>
    <property type="evidence" value="ECO:0007669"/>
    <property type="project" value="InterPro"/>
</dbReference>
<dbReference type="GO" id="GO:0051082">
    <property type="term" value="F:unfolded protein binding"/>
    <property type="evidence" value="ECO:0000318"/>
    <property type="project" value="GO_Central"/>
</dbReference>
<dbReference type="GO" id="GO:0006457">
    <property type="term" value="P:protein folding"/>
    <property type="evidence" value="ECO:0007669"/>
    <property type="project" value="InterPro"/>
</dbReference>
<dbReference type="CDD" id="cd00446">
    <property type="entry name" value="GrpE"/>
    <property type="match status" value="1"/>
</dbReference>
<dbReference type="Gene3D" id="3.90.20.20">
    <property type="match status" value="1"/>
</dbReference>
<dbReference type="Gene3D" id="2.30.22.10">
    <property type="entry name" value="Head domain of nucleotide exchange factor GrpE"/>
    <property type="match status" value="1"/>
</dbReference>
<dbReference type="HAMAP" id="MF_01151">
    <property type="entry name" value="GrpE"/>
    <property type="match status" value="1"/>
</dbReference>
<dbReference type="InterPro" id="IPR000740">
    <property type="entry name" value="GrpE"/>
</dbReference>
<dbReference type="InterPro" id="IPR013805">
    <property type="entry name" value="GrpE_coiled_coil"/>
</dbReference>
<dbReference type="InterPro" id="IPR009012">
    <property type="entry name" value="GrpE_head"/>
</dbReference>
<dbReference type="PANTHER" id="PTHR21237">
    <property type="entry name" value="GRPE PROTEIN"/>
    <property type="match status" value="1"/>
</dbReference>
<dbReference type="PANTHER" id="PTHR21237:SF23">
    <property type="entry name" value="GRPE PROTEIN HOMOLOG, MITOCHONDRIAL"/>
    <property type="match status" value="1"/>
</dbReference>
<dbReference type="Pfam" id="PF01025">
    <property type="entry name" value="GrpE"/>
    <property type="match status" value="1"/>
</dbReference>
<dbReference type="PRINTS" id="PR00773">
    <property type="entry name" value="GRPEPROTEIN"/>
</dbReference>
<dbReference type="SUPFAM" id="SSF58014">
    <property type="entry name" value="Coiled-coil domain of nucleotide exchange factor GrpE"/>
    <property type="match status" value="1"/>
</dbReference>
<dbReference type="SUPFAM" id="SSF51064">
    <property type="entry name" value="Head domain of nucleotide exchange factor GrpE"/>
    <property type="match status" value="1"/>
</dbReference>
<dbReference type="PROSITE" id="PS01071">
    <property type="entry name" value="GRPE"/>
    <property type="match status" value="1"/>
</dbReference>
<sequence>MSDHAEHAADAADTDAPEGDDAGGDDGEQAGDDGTSALSERVRALDADNADALADDVAALEARVETLTDELADAEDEVADLTERVQTKQADFKNYKERAKRKQEEIRERATEDLVERLLDVRDNLDRALDQEESESDEDGIREGVELTRDEFDRVLETEGVTEIRPEPGDSVDAARHEVMMRVDSDQPAGTIVDVYRPGYEMSGRVVRAAQVTVSEE</sequence>